<dbReference type="EMBL" id="AB013387">
    <property type="protein sequence ID" value="BAB11580.1"/>
    <property type="molecule type" value="Genomic_DNA"/>
</dbReference>
<dbReference type="EMBL" id="CP002688">
    <property type="protein sequence ID" value="AED96463.1"/>
    <property type="molecule type" value="Genomic_DNA"/>
</dbReference>
<dbReference type="EMBL" id="AY081343">
    <property type="protein sequence ID" value="AAL91232.1"/>
    <property type="molecule type" value="mRNA"/>
</dbReference>
<dbReference type="EMBL" id="BT000254">
    <property type="protein sequence ID" value="AAN15573.1"/>
    <property type="molecule type" value="mRNA"/>
</dbReference>
<dbReference type="EMBL" id="AY088205">
    <property type="protein sequence ID" value="AAM65747.1"/>
    <property type="molecule type" value="mRNA"/>
</dbReference>
<dbReference type="RefSeq" id="NP_200229.1">
    <property type="nucleotide sequence ID" value="NM_124798.4"/>
</dbReference>
<dbReference type="SMR" id="Q9FK23"/>
<dbReference type="FunCoup" id="Q9FK23">
    <property type="interactions" value="834"/>
</dbReference>
<dbReference type="IntAct" id="Q9FK23">
    <property type="interactions" value="1"/>
</dbReference>
<dbReference type="MINT" id="Q9FK23"/>
<dbReference type="STRING" id="3702.Q9FK23"/>
<dbReference type="iPTMnet" id="Q9FK23"/>
<dbReference type="PaxDb" id="3702-AT5G54180.1"/>
<dbReference type="ProteomicsDB" id="250967"/>
<dbReference type="EnsemblPlants" id="AT5G54180.1">
    <property type="protein sequence ID" value="AT5G54180.1"/>
    <property type="gene ID" value="AT5G54180"/>
</dbReference>
<dbReference type="GeneID" id="835506"/>
<dbReference type="Gramene" id="AT5G54180.1">
    <property type="protein sequence ID" value="AT5G54180.1"/>
    <property type="gene ID" value="AT5G54180"/>
</dbReference>
<dbReference type="KEGG" id="ath:AT5G54180"/>
<dbReference type="Araport" id="AT5G54180"/>
<dbReference type="TAIR" id="AT5G54180">
    <property type="gene designation" value="PTAC15"/>
</dbReference>
<dbReference type="eggNOG" id="KOG1267">
    <property type="taxonomic scope" value="Eukaryota"/>
</dbReference>
<dbReference type="HOGENOM" id="CLU_547927_0_0_1"/>
<dbReference type="InParanoid" id="Q9FK23"/>
<dbReference type="OMA" id="LHPRIDF"/>
<dbReference type="OrthoDB" id="637682at2759"/>
<dbReference type="PhylomeDB" id="Q9FK23"/>
<dbReference type="PRO" id="PR:Q9FK23"/>
<dbReference type="Proteomes" id="UP000006548">
    <property type="component" value="Chromosome 5"/>
</dbReference>
<dbReference type="ExpressionAtlas" id="Q9FK23">
    <property type="expression patterns" value="baseline and differential"/>
</dbReference>
<dbReference type="GO" id="GO:0009507">
    <property type="term" value="C:chloroplast"/>
    <property type="evidence" value="ECO:0000314"/>
    <property type="project" value="TAIR"/>
</dbReference>
<dbReference type="GO" id="GO:0042644">
    <property type="term" value="C:chloroplast nucleoid"/>
    <property type="evidence" value="ECO:0007005"/>
    <property type="project" value="TAIR"/>
</dbReference>
<dbReference type="GO" id="GO:0005739">
    <property type="term" value="C:mitochondrion"/>
    <property type="evidence" value="ECO:0007669"/>
    <property type="project" value="GOC"/>
</dbReference>
<dbReference type="GO" id="GO:0003690">
    <property type="term" value="F:double-stranded DNA binding"/>
    <property type="evidence" value="ECO:0007669"/>
    <property type="project" value="InterPro"/>
</dbReference>
<dbReference type="GO" id="GO:0003729">
    <property type="term" value="F:mRNA binding"/>
    <property type="evidence" value="ECO:0000314"/>
    <property type="project" value="TAIR"/>
</dbReference>
<dbReference type="GO" id="GO:0015979">
    <property type="term" value="P:photosynthesis"/>
    <property type="evidence" value="ECO:0000314"/>
    <property type="project" value="TAIR"/>
</dbReference>
<dbReference type="GO" id="GO:0006355">
    <property type="term" value="P:regulation of DNA-templated transcription"/>
    <property type="evidence" value="ECO:0007669"/>
    <property type="project" value="InterPro"/>
</dbReference>
<dbReference type="GO" id="GO:0006393">
    <property type="term" value="P:termination of mitochondrial transcription"/>
    <property type="evidence" value="ECO:0000314"/>
    <property type="project" value="TAIR"/>
</dbReference>
<dbReference type="FunFam" id="1.25.70.10:FF:000021">
    <property type="entry name" value="PTAC15"/>
    <property type="match status" value="1"/>
</dbReference>
<dbReference type="Gene3D" id="1.25.70.10">
    <property type="entry name" value="Transcription termination factor 3, mitochondrial"/>
    <property type="match status" value="2"/>
</dbReference>
<dbReference type="InterPro" id="IPR003690">
    <property type="entry name" value="MTERF"/>
</dbReference>
<dbReference type="InterPro" id="IPR038538">
    <property type="entry name" value="MTERF_sf"/>
</dbReference>
<dbReference type="PANTHER" id="PTHR13068">
    <property type="entry name" value="CGI-12 PROTEIN-RELATED"/>
    <property type="match status" value="1"/>
</dbReference>
<dbReference type="PANTHER" id="PTHR13068:SF135">
    <property type="entry name" value="TRANSCRIPTION TERMINATION FACTOR MTERF8, CHLOROPLASTIC"/>
    <property type="match status" value="1"/>
</dbReference>
<dbReference type="Pfam" id="PF02536">
    <property type="entry name" value="mTERF"/>
    <property type="match status" value="2"/>
</dbReference>
<dbReference type="SMART" id="SM00733">
    <property type="entry name" value="Mterf"/>
    <property type="match status" value="8"/>
</dbReference>
<reference key="1">
    <citation type="journal article" date="1998" name="DNA Res.">
        <title>Structural analysis of Arabidopsis thaliana chromosome 5. VI. Sequence features of the regions of 1,367,185 bp covered by 19 physically assigned P1 and TAC clones.</title>
        <authorList>
            <person name="Kotani H."/>
            <person name="Nakamura Y."/>
            <person name="Sato S."/>
            <person name="Asamizu E."/>
            <person name="Kaneko T."/>
            <person name="Miyajima N."/>
            <person name="Tabata S."/>
        </authorList>
    </citation>
    <scope>NUCLEOTIDE SEQUENCE [LARGE SCALE GENOMIC DNA]</scope>
    <source>
        <strain>cv. Columbia</strain>
    </source>
</reference>
<reference key="2">
    <citation type="journal article" date="2017" name="Plant J.">
        <title>Araport11: a complete reannotation of the Arabidopsis thaliana reference genome.</title>
        <authorList>
            <person name="Cheng C.Y."/>
            <person name="Krishnakumar V."/>
            <person name="Chan A.P."/>
            <person name="Thibaud-Nissen F."/>
            <person name="Schobel S."/>
            <person name="Town C.D."/>
        </authorList>
    </citation>
    <scope>GENOME REANNOTATION</scope>
    <source>
        <strain>cv. Columbia</strain>
    </source>
</reference>
<reference key="3">
    <citation type="journal article" date="2003" name="Science">
        <title>Empirical analysis of transcriptional activity in the Arabidopsis genome.</title>
        <authorList>
            <person name="Yamada K."/>
            <person name="Lim J."/>
            <person name="Dale J.M."/>
            <person name="Chen H."/>
            <person name="Shinn P."/>
            <person name="Palm C.J."/>
            <person name="Southwick A.M."/>
            <person name="Wu H.C."/>
            <person name="Kim C.J."/>
            <person name="Nguyen M."/>
            <person name="Pham P.K."/>
            <person name="Cheuk R.F."/>
            <person name="Karlin-Newmann G."/>
            <person name="Liu S.X."/>
            <person name="Lam B."/>
            <person name="Sakano H."/>
            <person name="Wu T."/>
            <person name="Yu G."/>
            <person name="Miranda M."/>
            <person name="Quach H.L."/>
            <person name="Tripp M."/>
            <person name="Chang C.H."/>
            <person name="Lee J.M."/>
            <person name="Toriumi M.J."/>
            <person name="Chan M.M."/>
            <person name="Tang C.C."/>
            <person name="Onodera C.S."/>
            <person name="Deng J.M."/>
            <person name="Akiyama K."/>
            <person name="Ansari Y."/>
            <person name="Arakawa T."/>
            <person name="Banh J."/>
            <person name="Banno F."/>
            <person name="Bowser L."/>
            <person name="Brooks S.Y."/>
            <person name="Carninci P."/>
            <person name="Chao Q."/>
            <person name="Choy N."/>
            <person name="Enju A."/>
            <person name="Goldsmith A.D."/>
            <person name="Gurjal M."/>
            <person name="Hansen N.F."/>
            <person name="Hayashizaki Y."/>
            <person name="Johnson-Hopson C."/>
            <person name="Hsuan V.W."/>
            <person name="Iida K."/>
            <person name="Karnes M."/>
            <person name="Khan S."/>
            <person name="Koesema E."/>
            <person name="Ishida J."/>
            <person name="Jiang P.X."/>
            <person name="Jones T."/>
            <person name="Kawai J."/>
            <person name="Kamiya A."/>
            <person name="Meyers C."/>
            <person name="Nakajima M."/>
            <person name="Narusaka M."/>
            <person name="Seki M."/>
            <person name="Sakurai T."/>
            <person name="Satou M."/>
            <person name="Tamse R."/>
            <person name="Vaysberg M."/>
            <person name="Wallender E.K."/>
            <person name="Wong C."/>
            <person name="Yamamura Y."/>
            <person name="Yuan S."/>
            <person name="Shinozaki K."/>
            <person name="Davis R.W."/>
            <person name="Theologis A."/>
            <person name="Ecker J.R."/>
        </authorList>
    </citation>
    <scope>NUCLEOTIDE SEQUENCE [LARGE SCALE MRNA]</scope>
    <source>
        <strain>cv. Columbia</strain>
    </source>
</reference>
<reference key="4">
    <citation type="submission" date="2002-03" db="EMBL/GenBank/DDBJ databases">
        <title>Full-length cDNA from Arabidopsis thaliana.</title>
        <authorList>
            <person name="Brover V.V."/>
            <person name="Troukhan M.E."/>
            <person name="Alexandrov N.A."/>
            <person name="Lu Y.-P."/>
            <person name="Flavell R.B."/>
            <person name="Feldmann K.A."/>
        </authorList>
    </citation>
    <scope>NUCLEOTIDE SEQUENCE [LARGE SCALE MRNA]</scope>
</reference>
<reference key="5">
    <citation type="journal article" date="2006" name="Plant Cell">
        <title>pTAC2, -6, and -12 are components of the transcriptionally active plastid chromosome that are required for plastid gene expression.</title>
        <authorList>
            <person name="Pfalz J."/>
            <person name="Liere K."/>
            <person name="Kandlbinder A."/>
            <person name="Dietz K.-J."/>
            <person name="Oelmueller R."/>
        </authorList>
    </citation>
    <scope>IDENTIFICATION BY MASS SPECTROMETRY</scope>
    <scope>FUNCTION</scope>
    <scope>SUBCELLULAR LOCATION</scope>
</reference>
<reference key="6">
    <citation type="journal article" date="2011" name="Proc. Natl. Acad. Sci. U.S.A.">
        <title>Plastid gene expression and plant development require a plastidic protein of the mitochondrial transcription termination factor family.</title>
        <authorList>
            <person name="Babiychuk E."/>
            <person name="Vandepoele K."/>
            <person name="Wissing J."/>
            <person name="Garcia-Diaz M."/>
            <person name="De Rycke R."/>
            <person name="Akbari H."/>
            <person name="Joubes J."/>
            <person name="Beeckman T."/>
            <person name="Jaensch L."/>
            <person name="Frentzen M."/>
            <person name="Van Montagu M.C."/>
            <person name="Kushnir S."/>
        </authorList>
    </citation>
    <scope>SUBCELLULAR LOCATION</scope>
</reference>
<reference key="7">
    <citation type="journal article" date="2012" name="Front. Plant Sci.">
        <title>Arabidopsis thaliana mTERF proteins: evolution and functional classification.</title>
        <authorList>
            <person name="Kleine T."/>
        </authorList>
    </citation>
    <scope>GENE FAMILY</scope>
</reference>
<evidence type="ECO:0000255" key="1"/>
<evidence type="ECO:0000269" key="2">
    <source>
    </source>
</evidence>
<evidence type="ECO:0000269" key="3">
    <source>
    </source>
</evidence>
<evidence type="ECO:0000303" key="4">
    <source>
    </source>
</evidence>
<evidence type="ECO:0000303" key="5">
    <source>
    </source>
</evidence>
<evidence type="ECO:0000305" key="6"/>
<evidence type="ECO:0000312" key="7">
    <source>
        <dbReference type="Araport" id="AT5G54180"/>
    </source>
</evidence>
<evidence type="ECO:0000312" key="8">
    <source>
        <dbReference type="EMBL" id="BAB11580.1"/>
    </source>
</evidence>
<comment type="function">
    <text evidence="2">Transcription termination factor that is transcriptionally active in chloroplasts.</text>
</comment>
<comment type="subcellular location">
    <subcellularLocation>
        <location evidence="2 3">Plastid</location>
        <location evidence="2 3">Chloroplast</location>
    </subcellularLocation>
</comment>
<comment type="similarity">
    <text evidence="6">Belongs to the mTERF family.</text>
</comment>
<organism>
    <name type="scientific">Arabidopsis thaliana</name>
    <name type="common">Mouse-ear cress</name>
    <dbReference type="NCBI Taxonomy" id="3702"/>
    <lineage>
        <taxon>Eukaryota</taxon>
        <taxon>Viridiplantae</taxon>
        <taxon>Streptophyta</taxon>
        <taxon>Embryophyta</taxon>
        <taxon>Tracheophyta</taxon>
        <taxon>Spermatophyta</taxon>
        <taxon>Magnoliopsida</taxon>
        <taxon>eudicotyledons</taxon>
        <taxon>Gunneridae</taxon>
        <taxon>Pentapetalae</taxon>
        <taxon>rosids</taxon>
        <taxon>malvids</taxon>
        <taxon>Brassicales</taxon>
        <taxon>Brassicaceae</taxon>
        <taxon>Camelineae</taxon>
        <taxon>Arabidopsis</taxon>
    </lineage>
</organism>
<gene>
    <name evidence="5" type="primary">MTERF8</name>
    <name evidence="4" type="synonym">PTAC15</name>
    <name evidence="7" type="ordered locus">At5g54180</name>
    <name evidence="8" type="ORF">K18G13.5</name>
</gene>
<accession>Q9FK23</accession>
<accession>Q8L9V2</accession>
<name>MTEF8_ARATH</name>
<proteinExistence type="evidence at protein level"/>
<sequence length="500" mass="56350">MVILSLVSCSFSVFSPPISLRLHLPPVTSLCSHGTFPASSTFRSQLQPLLISCLNHREPALTFRCSCLSSPIESGSQIESLFSLFRDIGFIEEETEMILAKNPDIKSTSLDKIGARVASLQSLKINGFPLQGLIAKCPNLLTSEEFDLVISFLVDELEGRLDPELVERLLSVVDTSILLSFNQKVRLLLLHGIPKEKISHVLNKVYLNKLLYQKSVEDIERLISFLEPFGGIGIIARRPVILNSDLDSQLIPRVDFIRNLSGEDDFATGTVLRRLPAILSYSVEHMNGQVEFLKSFAGLTSEQVFKIVHVFPNVISTSKERKLRPRIEFLKECGFDSPGMFKFLSKAPLILALSENNLSHKLGFLVKIGYKHRTKELAFAMGAVTRTSSDNMQRVIGLYLSYGLSFEDILAMSTKHPQVLQYNYTSLEEKLEYLIEYMGREVEELLAFPAFLGYKLDSRIKHRYEEKLKSRGENMSLNKLLTVSAERFSKAADNIEMICL</sequence>
<protein>
    <recommendedName>
        <fullName evidence="6">Transcription termination factor MTERF8, chloroplastic</fullName>
    </recommendedName>
    <alternativeName>
        <fullName evidence="5">Mitochondrial transcription termination factor 8</fullName>
    </alternativeName>
    <alternativeName>
        <fullName evidence="4">Protein PLASTID TRANSCRIPTIONALLY ACTIVE 15</fullName>
    </alternativeName>
</protein>
<feature type="transit peptide" description="Chloroplast" evidence="1">
    <location>
        <begin position="1"/>
        <end position="64"/>
    </location>
</feature>
<feature type="chain" id="PRO_0000436200" description="Transcription termination factor MTERF8, chloroplastic">
    <location>
        <begin position="65"/>
        <end position="500"/>
    </location>
</feature>
<feature type="sequence conflict" description="In Ref. 4; AAM65747." evidence="6" ref="4">
    <original>F</original>
    <variation>S</variation>
    <location>
        <position position="14"/>
    </location>
</feature>
<feature type="sequence conflict" description="In Ref. 4; AAM65747." evidence="6" ref="4">
    <original>S</original>
    <variation>N</variation>
    <location>
        <position position="76"/>
    </location>
</feature>
<feature type="sequence conflict" description="In Ref. 4; AAM65747." evidence="6" ref="4">
    <original>D</original>
    <variation>N</variation>
    <location>
        <position position="264"/>
    </location>
</feature>
<keyword id="KW-0150">Chloroplast</keyword>
<keyword id="KW-0934">Plastid</keyword>
<keyword id="KW-1185">Reference proteome</keyword>
<keyword id="KW-0804">Transcription</keyword>
<keyword id="KW-0805">Transcription regulation</keyword>
<keyword id="KW-0806">Transcription termination</keyword>
<keyword id="KW-0809">Transit peptide</keyword>